<organism>
    <name type="scientific">Rhodopseudomonas palustris (strain ATCC BAA-98 / CGA009)</name>
    <dbReference type="NCBI Taxonomy" id="258594"/>
    <lineage>
        <taxon>Bacteria</taxon>
        <taxon>Pseudomonadati</taxon>
        <taxon>Pseudomonadota</taxon>
        <taxon>Alphaproteobacteria</taxon>
        <taxon>Hyphomicrobiales</taxon>
        <taxon>Nitrobacteraceae</taxon>
        <taxon>Rhodopseudomonas</taxon>
    </lineage>
</organism>
<dbReference type="EMBL" id="BX572608">
    <property type="protein sequence ID" value="CAE30210.1"/>
    <property type="molecule type" value="Genomic_DNA"/>
</dbReference>
<dbReference type="RefSeq" id="WP_011160302.1">
    <property type="nucleotide sequence ID" value="NZ_CP116810.1"/>
</dbReference>
<dbReference type="SMR" id="Q6N0J2"/>
<dbReference type="STRING" id="258594.RPA4770"/>
<dbReference type="GeneID" id="66895931"/>
<dbReference type="eggNOG" id="COG2967">
    <property type="taxonomic scope" value="Bacteria"/>
</dbReference>
<dbReference type="HOGENOM" id="CLU_128074_1_0_5"/>
<dbReference type="PhylomeDB" id="Q6N0J2"/>
<dbReference type="GO" id="GO:0070987">
    <property type="term" value="P:error-free translesion synthesis"/>
    <property type="evidence" value="ECO:0007669"/>
    <property type="project" value="TreeGrafter"/>
</dbReference>
<dbReference type="Gene3D" id="2.60.40.1470">
    <property type="entry name" value="ApaG domain"/>
    <property type="match status" value="1"/>
</dbReference>
<dbReference type="HAMAP" id="MF_00791">
    <property type="entry name" value="ApaG"/>
    <property type="match status" value="1"/>
</dbReference>
<dbReference type="InterPro" id="IPR007474">
    <property type="entry name" value="ApaG_domain"/>
</dbReference>
<dbReference type="InterPro" id="IPR036767">
    <property type="entry name" value="ApaG_sf"/>
</dbReference>
<dbReference type="InterPro" id="IPR023065">
    <property type="entry name" value="Uncharacterised_ApaG"/>
</dbReference>
<dbReference type="NCBIfam" id="NF003967">
    <property type="entry name" value="PRK05461.1"/>
    <property type="match status" value="1"/>
</dbReference>
<dbReference type="PANTHER" id="PTHR14289">
    <property type="entry name" value="F-BOX ONLY PROTEIN 3"/>
    <property type="match status" value="1"/>
</dbReference>
<dbReference type="PANTHER" id="PTHR14289:SF16">
    <property type="entry name" value="POLYMERASE DELTA-INTERACTING PROTEIN 2"/>
    <property type="match status" value="1"/>
</dbReference>
<dbReference type="Pfam" id="PF04379">
    <property type="entry name" value="DUF525"/>
    <property type="match status" value="1"/>
</dbReference>
<dbReference type="SUPFAM" id="SSF110069">
    <property type="entry name" value="ApaG-like"/>
    <property type="match status" value="1"/>
</dbReference>
<dbReference type="PROSITE" id="PS51087">
    <property type="entry name" value="APAG"/>
    <property type="match status" value="1"/>
</dbReference>
<proteinExistence type="inferred from homology"/>
<sequence>MYRAVTRRIEVTVEPNYLPERSSAENRQYFWSYTVVITNSGEETVKLRTRHWVITDASGRTQEVRGEGVVGEQPVLAPGERFEYTSGVPLPTASGFMAGRYQMETEAGEKFEIDVPPFSLDSPEGKRTLN</sequence>
<gene>
    <name evidence="1" type="primary">apaG</name>
    <name type="ordered locus">RPA4770</name>
</gene>
<reference key="1">
    <citation type="journal article" date="2004" name="Nat. Biotechnol.">
        <title>Complete genome sequence of the metabolically versatile photosynthetic bacterium Rhodopseudomonas palustris.</title>
        <authorList>
            <person name="Larimer F.W."/>
            <person name="Chain P."/>
            <person name="Hauser L."/>
            <person name="Lamerdin J.E."/>
            <person name="Malfatti S."/>
            <person name="Do L."/>
            <person name="Land M.L."/>
            <person name="Pelletier D.A."/>
            <person name="Beatty J.T."/>
            <person name="Lang A.S."/>
            <person name="Tabita F.R."/>
            <person name="Gibson J.L."/>
            <person name="Hanson T.E."/>
            <person name="Bobst C."/>
            <person name="Torres y Torres J.L."/>
            <person name="Peres C."/>
            <person name="Harrison F.H."/>
            <person name="Gibson J."/>
            <person name="Harwood C.S."/>
        </authorList>
    </citation>
    <scope>NUCLEOTIDE SEQUENCE [LARGE SCALE GENOMIC DNA]</scope>
    <source>
        <strain>ATCC BAA-98 / CGA009</strain>
    </source>
</reference>
<evidence type="ECO:0000255" key="1">
    <source>
        <dbReference type="HAMAP-Rule" id="MF_00791"/>
    </source>
</evidence>
<feature type="chain" id="PRO_0000197960" description="Protein ApaG">
    <location>
        <begin position="1"/>
        <end position="130"/>
    </location>
</feature>
<feature type="domain" description="ApaG" evidence="1">
    <location>
        <begin position="3"/>
        <end position="127"/>
    </location>
</feature>
<protein>
    <recommendedName>
        <fullName evidence="1">Protein ApaG</fullName>
    </recommendedName>
</protein>
<name>APAG_RHOPA</name>
<accession>Q6N0J2</accession>